<reference key="1">
    <citation type="journal article" date="2004" name="Genome Res.">
        <title>The status, quality, and expansion of the NIH full-length cDNA project: the Mammalian Gene Collection (MGC).</title>
        <authorList>
            <consortium name="The MGC Project Team"/>
        </authorList>
    </citation>
    <scope>NUCLEOTIDE SEQUENCE [LARGE SCALE MRNA]</scope>
    <source>
        <tissue>Brain</tissue>
    </source>
</reference>
<comment type="function">
    <text evidence="1">Probable regulator of CREB1 transcriptional activity which is involved in adipose cells differentiation. May also play a regulatory role in the cell cycle (By similarity).</text>
</comment>
<comment type="subunit">
    <text evidence="1">Interacts with CREB1; regulates CREB1 phosphorylation, stability and transcriptional activity.</text>
</comment>
<comment type="subcellular location">
    <subcellularLocation>
        <location evidence="1">Nucleus</location>
    </subcellularLocation>
</comment>
<comment type="PTM">
    <text evidence="1">Phosphorylated by AMPK.</text>
</comment>
<comment type="similarity">
    <text evidence="3">Belongs to the bZIP family. ATF subfamily.</text>
</comment>
<accession>Q5BJU6</accession>
<name>CRBL2_RAT</name>
<evidence type="ECO:0000250" key="1"/>
<evidence type="ECO:0000256" key="2">
    <source>
        <dbReference type="SAM" id="MobiDB-lite"/>
    </source>
</evidence>
<evidence type="ECO:0000305" key="3"/>
<proteinExistence type="evidence at transcript level"/>
<gene>
    <name type="primary">Crebl2</name>
</gene>
<protein>
    <recommendedName>
        <fullName>cAMP-responsive element-binding protein-like 2</fullName>
    </recommendedName>
</protein>
<keyword id="KW-0010">Activator</keyword>
<keyword id="KW-0221">Differentiation</keyword>
<keyword id="KW-0238">DNA-binding</keyword>
<keyword id="KW-0539">Nucleus</keyword>
<keyword id="KW-0597">Phosphoprotein</keyword>
<keyword id="KW-1185">Reference proteome</keyword>
<keyword id="KW-0804">Transcription</keyword>
<keyword id="KW-0805">Transcription regulation</keyword>
<feature type="chain" id="PRO_0000318194" description="cAMP-responsive element-binding protein-like 2">
    <location>
        <begin position="1"/>
        <end position="123"/>
    </location>
</feature>
<feature type="domain" description="bZIP">
    <location>
        <begin position="23"/>
        <end position="86"/>
    </location>
</feature>
<feature type="region of interest" description="Disordered" evidence="2">
    <location>
        <begin position="1"/>
        <end position="24"/>
    </location>
</feature>
<feature type="region of interest" description="Basic motif" evidence="1">
    <location>
        <begin position="29"/>
        <end position="60"/>
    </location>
</feature>
<feature type="region of interest" description="Leucine-zipper" evidence="1">
    <location>
        <begin position="62"/>
        <end position="69"/>
    </location>
</feature>
<feature type="region of interest" description="Disordered" evidence="2">
    <location>
        <begin position="93"/>
        <end position="123"/>
    </location>
</feature>
<feature type="compositionally biased region" description="Basic residues" evidence="2">
    <location>
        <begin position="10"/>
        <end position="21"/>
    </location>
</feature>
<feature type="compositionally biased region" description="Polar residues" evidence="2">
    <location>
        <begin position="114"/>
        <end position="123"/>
    </location>
</feature>
<dbReference type="EMBL" id="BC091323">
    <property type="protein sequence ID" value="AAH91323.1"/>
    <property type="molecule type" value="mRNA"/>
</dbReference>
<dbReference type="RefSeq" id="NP_001015027.1">
    <property type="nucleotide sequence ID" value="NM_001015027.1"/>
</dbReference>
<dbReference type="SMR" id="Q5BJU6"/>
<dbReference type="FunCoup" id="Q5BJU6">
    <property type="interactions" value="1113"/>
</dbReference>
<dbReference type="STRING" id="10116.ENSRNOP00000070776"/>
<dbReference type="PaxDb" id="10116-ENSRNOP00000009324"/>
<dbReference type="Ensembl" id="ENSRNOT00000119142.1">
    <property type="protein sequence ID" value="ENSRNOP00000094879.1"/>
    <property type="gene ID" value="ENSRNOG00000067300.1"/>
</dbReference>
<dbReference type="GeneID" id="362453"/>
<dbReference type="KEGG" id="rno:362453"/>
<dbReference type="UCSC" id="RGD:1309502">
    <property type="organism name" value="rat"/>
</dbReference>
<dbReference type="AGR" id="RGD:1309502"/>
<dbReference type="CTD" id="1389"/>
<dbReference type="RGD" id="1309502">
    <property type="gene designation" value="Crebl2"/>
</dbReference>
<dbReference type="eggNOG" id="KOG4515">
    <property type="taxonomic scope" value="Eukaryota"/>
</dbReference>
<dbReference type="GeneTree" id="ENSGT00390000005388"/>
<dbReference type="InParanoid" id="Q5BJU6"/>
<dbReference type="OrthoDB" id="5984119at2759"/>
<dbReference type="PhylomeDB" id="Q5BJU6"/>
<dbReference type="TreeFam" id="TF323305"/>
<dbReference type="PRO" id="PR:Q5BJU6"/>
<dbReference type="Proteomes" id="UP000002494">
    <property type="component" value="Chromosome 4"/>
</dbReference>
<dbReference type="GO" id="GO:0005634">
    <property type="term" value="C:nucleus"/>
    <property type="evidence" value="ECO:0000250"/>
    <property type="project" value="UniProtKB"/>
</dbReference>
<dbReference type="GO" id="GO:0003677">
    <property type="term" value="F:DNA binding"/>
    <property type="evidence" value="ECO:0007669"/>
    <property type="project" value="UniProtKB-KW"/>
</dbReference>
<dbReference type="GO" id="GO:0003700">
    <property type="term" value="F:DNA-binding transcription factor activity"/>
    <property type="evidence" value="ECO:0007669"/>
    <property type="project" value="InterPro"/>
</dbReference>
<dbReference type="GO" id="GO:0030154">
    <property type="term" value="P:cell differentiation"/>
    <property type="evidence" value="ECO:0007669"/>
    <property type="project" value="UniProtKB-KW"/>
</dbReference>
<dbReference type="GO" id="GO:0046326">
    <property type="term" value="P:positive regulation of D-glucose import"/>
    <property type="evidence" value="ECO:0000250"/>
    <property type="project" value="UniProtKB"/>
</dbReference>
<dbReference type="GO" id="GO:0045893">
    <property type="term" value="P:positive regulation of DNA-templated transcription"/>
    <property type="evidence" value="ECO:0000250"/>
    <property type="project" value="UniProtKB"/>
</dbReference>
<dbReference type="GO" id="GO:0045600">
    <property type="term" value="P:positive regulation of fat cell differentiation"/>
    <property type="evidence" value="ECO:0000250"/>
    <property type="project" value="UniProtKB"/>
</dbReference>
<dbReference type="GO" id="GO:0046889">
    <property type="term" value="P:positive regulation of lipid biosynthetic process"/>
    <property type="evidence" value="ECO:0000250"/>
    <property type="project" value="UniProtKB"/>
</dbReference>
<dbReference type="GO" id="GO:0033138">
    <property type="term" value="P:positive regulation of peptidyl-serine phosphorylation"/>
    <property type="evidence" value="ECO:0000250"/>
    <property type="project" value="UniProtKB"/>
</dbReference>
<dbReference type="GO" id="GO:0050821">
    <property type="term" value="P:protein stabilization"/>
    <property type="evidence" value="ECO:0000250"/>
    <property type="project" value="UniProtKB"/>
</dbReference>
<dbReference type="GO" id="GO:0006355">
    <property type="term" value="P:regulation of DNA-templated transcription"/>
    <property type="evidence" value="ECO:0000318"/>
    <property type="project" value="GO_Central"/>
</dbReference>
<dbReference type="CDD" id="cd14709">
    <property type="entry name" value="bZIP_CREBL2"/>
    <property type="match status" value="1"/>
</dbReference>
<dbReference type="FunFam" id="1.20.5.170:FF:000044">
    <property type="entry name" value="cAMP-responsive element-binding protein-like 2 isoform X2"/>
    <property type="match status" value="1"/>
</dbReference>
<dbReference type="Gene3D" id="1.20.5.170">
    <property type="match status" value="1"/>
</dbReference>
<dbReference type="InterPro" id="IPR004827">
    <property type="entry name" value="bZIP"/>
</dbReference>
<dbReference type="InterPro" id="IPR046347">
    <property type="entry name" value="bZIP_sf"/>
</dbReference>
<dbReference type="InterPro" id="IPR039250">
    <property type="entry name" value="CREBL2/REPTOR-BP"/>
</dbReference>
<dbReference type="PANTHER" id="PTHR21051">
    <property type="entry name" value="CAMP-RESPONSIVE ELEMENT-BINDING PROTEIN-LIKE 2"/>
    <property type="match status" value="1"/>
</dbReference>
<dbReference type="PANTHER" id="PTHR21051:SF4">
    <property type="entry name" value="CAMP-RESPONSIVE ELEMENT-BINDING PROTEIN-LIKE 2"/>
    <property type="match status" value="1"/>
</dbReference>
<dbReference type="Pfam" id="PF07716">
    <property type="entry name" value="bZIP_2"/>
    <property type="match status" value="1"/>
</dbReference>
<dbReference type="SUPFAM" id="SSF57959">
    <property type="entry name" value="Leucine zipper domain"/>
    <property type="match status" value="1"/>
</dbReference>
<sequence>MDDSKVVGGKVKKPGKRGRKPAKIDLKAKLERSRQSARECRARKKLRYQYLEELVSSRERAICALREELEMYKQWCMAMDQGKIPSEIRALLTGEEQNKSQQNSSRHPKAGKTDANTNSLVGN</sequence>
<organism>
    <name type="scientific">Rattus norvegicus</name>
    <name type="common">Rat</name>
    <dbReference type="NCBI Taxonomy" id="10116"/>
    <lineage>
        <taxon>Eukaryota</taxon>
        <taxon>Metazoa</taxon>
        <taxon>Chordata</taxon>
        <taxon>Craniata</taxon>
        <taxon>Vertebrata</taxon>
        <taxon>Euteleostomi</taxon>
        <taxon>Mammalia</taxon>
        <taxon>Eutheria</taxon>
        <taxon>Euarchontoglires</taxon>
        <taxon>Glires</taxon>
        <taxon>Rodentia</taxon>
        <taxon>Myomorpha</taxon>
        <taxon>Muroidea</taxon>
        <taxon>Muridae</taxon>
        <taxon>Murinae</taxon>
        <taxon>Rattus</taxon>
    </lineage>
</organism>